<protein>
    <recommendedName>
        <fullName evidence="1">Metallothiol transferase FosB</fullName>
        <ecNumber evidence="1">2.5.1.-</ecNumber>
    </recommendedName>
    <alternativeName>
        <fullName evidence="1">Fosfomycin resistance protein</fullName>
    </alternativeName>
</protein>
<evidence type="ECO:0000255" key="1">
    <source>
        <dbReference type="HAMAP-Rule" id="MF_01512"/>
    </source>
</evidence>
<evidence type="ECO:0000255" key="2">
    <source>
        <dbReference type="PROSITE-ProRule" id="PRU01163"/>
    </source>
</evidence>
<evidence type="ECO:0000305" key="3"/>
<gene>
    <name evidence="1" type="primary">fosB</name>
    <name type="ordered locus">Bsph_4430</name>
</gene>
<proteinExistence type="inferred from homology"/>
<reference key="1">
    <citation type="journal article" date="2008" name="J. Bacteriol.">
        <title>Complete genome sequence of the mosquitocidal bacterium Bacillus sphaericus C3-41 and comparison with those of closely related Bacillus species.</title>
        <authorList>
            <person name="Hu X."/>
            <person name="Fan W."/>
            <person name="Han B."/>
            <person name="Liu H."/>
            <person name="Zheng D."/>
            <person name="Li Q."/>
            <person name="Dong W."/>
            <person name="Yan J."/>
            <person name="Gao M."/>
            <person name="Berry C."/>
            <person name="Yuan Z."/>
        </authorList>
    </citation>
    <scope>NUCLEOTIDE SEQUENCE [LARGE SCALE GENOMIC DNA]</scope>
    <source>
        <strain>C3-41</strain>
    </source>
</reference>
<accession>B1HZM2</accession>
<sequence>MTVQSINHLLFSVSDLEKSIAFYENVFGAKLLVKGNSTAYFDVNGLWLALNVEKDIPRNDIQYSYTHIAFTISEDEFDKMYDKLVQLKVLILDGRQRDERDKKSIYFTDPDGHKFEFHTGTLQDRLDYYKKEKLHMEFFNH</sequence>
<comment type="function">
    <text evidence="1">Metallothiol transferase which confers resistance to fosfomycin by catalyzing the addition of a thiol cofactor to fosfomycin. L-cysteine is probably the physiological thiol donor.</text>
</comment>
<comment type="cofactor">
    <cofactor evidence="1">
        <name>Mg(2+)</name>
        <dbReference type="ChEBI" id="CHEBI:18420"/>
    </cofactor>
</comment>
<comment type="subunit">
    <text evidence="1">Homodimer.</text>
</comment>
<comment type="subcellular location">
    <subcellularLocation>
        <location evidence="1">Cytoplasm</location>
    </subcellularLocation>
</comment>
<comment type="similarity">
    <text evidence="1">Belongs to the fosfomycin resistance protein family. FosB subfamily.</text>
</comment>
<comment type="sequence caution" evidence="3">
    <conflict type="erroneous initiation">
        <sequence resource="EMBL-CDS" id="ACA41881"/>
    </conflict>
</comment>
<keyword id="KW-0046">Antibiotic resistance</keyword>
<keyword id="KW-0963">Cytoplasm</keyword>
<keyword id="KW-0460">Magnesium</keyword>
<keyword id="KW-0479">Metal-binding</keyword>
<keyword id="KW-0808">Transferase</keyword>
<name>FOSB_LYSSC</name>
<dbReference type="EC" id="2.5.1.-" evidence="1"/>
<dbReference type="EMBL" id="CP000817">
    <property type="protein sequence ID" value="ACA41881.1"/>
    <property type="status" value="ALT_INIT"/>
    <property type="molecule type" value="Genomic_DNA"/>
</dbReference>
<dbReference type="SMR" id="B1HZM2"/>
<dbReference type="EnsemblBacteria" id="ACA41881">
    <property type="protein sequence ID" value="ACA41881"/>
    <property type="gene ID" value="Bsph_4430"/>
</dbReference>
<dbReference type="KEGG" id="lsp:Bsph_4430"/>
<dbReference type="HOGENOM" id="CLU_121356_0_0_9"/>
<dbReference type="Proteomes" id="UP000002164">
    <property type="component" value="Chromosome"/>
</dbReference>
<dbReference type="GO" id="GO:0005737">
    <property type="term" value="C:cytoplasm"/>
    <property type="evidence" value="ECO:0007669"/>
    <property type="project" value="UniProtKB-SubCell"/>
</dbReference>
<dbReference type="GO" id="GO:0000287">
    <property type="term" value="F:magnesium ion binding"/>
    <property type="evidence" value="ECO:0007669"/>
    <property type="project" value="UniProtKB-UniRule"/>
</dbReference>
<dbReference type="GO" id="GO:0016765">
    <property type="term" value="F:transferase activity, transferring alkyl or aryl (other than methyl) groups"/>
    <property type="evidence" value="ECO:0007669"/>
    <property type="project" value="UniProtKB-UniRule"/>
</dbReference>
<dbReference type="GO" id="GO:0046677">
    <property type="term" value="P:response to antibiotic"/>
    <property type="evidence" value="ECO:0007669"/>
    <property type="project" value="UniProtKB-UniRule"/>
</dbReference>
<dbReference type="Gene3D" id="3.10.180.10">
    <property type="entry name" value="2,3-Dihydroxybiphenyl 1,2-Dioxygenase, domain 1"/>
    <property type="match status" value="1"/>
</dbReference>
<dbReference type="HAMAP" id="MF_01512">
    <property type="entry name" value="FosB"/>
    <property type="match status" value="1"/>
</dbReference>
<dbReference type="InterPro" id="IPR051332">
    <property type="entry name" value="Fosfomycin_Res_Enzymes"/>
</dbReference>
<dbReference type="InterPro" id="IPR029068">
    <property type="entry name" value="Glyas_Bleomycin-R_OHBP_Dase"/>
</dbReference>
<dbReference type="InterPro" id="IPR004360">
    <property type="entry name" value="Glyas_Fos-R_dOase_dom"/>
</dbReference>
<dbReference type="InterPro" id="IPR022858">
    <property type="entry name" value="Metallothiol_Trafse_FosB"/>
</dbReference>
<dbReference type="InterPro" id="IPR037523">
    <property type="entry name" value="VOC"/>
</dbReference>
<dbReference type="NCBIfam" id="NF038306">
    <property type="entry name" value="fosM_gen"/>
    <property type="match status" value="1"/>
</dbReference>
<dbReference type="NCBIfam" id="NF003152">
    <property type="entry name" value="PRK04101.1"/>
    <property type="match status" value="1"/>
</dbReference>
<dbReference type="PANTHER" id="PTHR36113:SF6">
    <property type="entry name" value="FOSFOMYCIN RESISTANCE PROTEIN FOSX"/>
    <property type="match status" value="1"/>
</dbReference>
<dbReference type="PANTHER" id="PTHR36113">
    <property type="entry name" value="LYASE, PUTATIVE-RELATED-RELATED"/>
    <property type="match status" value="1"/>
</dbReference>
<dbReference type="Pfam" id="PF00903">
    <property type="entry name" value="Glyoxalase"/>
    <property type="match status" value="1"/>
</dbReference>
<dbReference type="SUPFAM" id="SSF54593">
    <property type="entry name" value="Glyoxalase/Bleomycin resistance protein/Dihydroxybiphenyl dioxygenase"/>
    <property type="match status" value="1"/>
</dbReference>
<dbReference type="PROSITE" id="PS51819">
    <property type="entry name" value="VOC"/>
    <property type="match status" value="1"/>
</dbReference>
<organism>
    <name type="scientific">Lysinibacillus sphaericus (strain C3-41)</name>
    <dbReference type="NCBI Taxonomy" id="444177"/>
    <lineage>
        <taxon>Bacteria</taxon>
        <taxon>Bacillati</taxon>
        <taxon>Bacillota</taxon>
        <taxon>Bacilli</taxon>
        <taxon>Bacillales</taxon>
        <taxon>Bacillaceae</taxon>
        <taxon>Lysinibacillus</taxon>
    </lineage>
</organism>
<feature type="chain" id="PRO_0000383366" description="Metallothiol transferase FosB">
    <location>
        <begin position="1"/>
        <end position="141"/>
    </location>
</feature>
<feature type="domain" description="VOC" evidence="2">
    <location>
        <begin position="5"/>
        <end position="120"/>
    </location>
</feature>
<feature type="active site" description="Proton donor/acceptor" evidence="2">
    <location>
        <position position="116"/>
    </location>
</feature>
<feature type="binding site" evidence="1">
    <location>
        <position position="8"/>
    </location>
    <ligand>
        <name>Mg(2+)</name>
        <dbReference type="ChEBI" id="CHEBI:18420"/>
    </ligand>
</feature>
<feature type="binding site" evidence="1">
    <location>
        <position position="67"/>
    </location>
    <ligand>
        <name>Mg(2+)</name>
        <dbReference type="ChEBI" id="CHEBI:18420"/>
    </ligand>
</feature>
<feature type="binding site" evidence="1">
    <location>
        <position position="116"/>
    </location>
    <ligand>
        <name>Mg(2+)</name>
        <dbReference type="ChEBI" id="CHEBI:18420"/>
    </ligand>
</feature>